<keyword id="KW-1185">Reference proteome</keyword>
<keyword id="KW-0677">Repeat</keyword>
<keyword id="KW-0802">TPR repeat</keyword>
<comment type="similarity">
    <text evidence="1">Belongs to the TTC36 family.</text>
</comment>
<evidence type="ECO:0000305" key="1"/>
<evidence type="ECO:0000312" key="2">
    <source>
        <dbReference type="WormBase" id="CBG13375a"/>
    </source>
</evidence>
<organism>
    <name type="scientific">Caenorhabditis briggsae</name>
    <dbReference type="NCBI Taxonomy" id="6238"/>
    <lineage>
        <taxon>Eukaryota</taxon>
        <taxon>Metazoa</taxon>
        <taxon>Ecdysozoa</taxon>
        <taxon>Nematoda</taxon>
        <taxon>Chromadorea</taxon>
        <taxon>Rhabditida</taxon>
        <taxon>Rhabditina</taxon>
        <taxon>Rhabditomorpha</taxon>
        <taxon>Rhabditoidea</taxon>
        <taxon>Rhabditidae</taxon>
        <taxon>Peloderinae</taxon>
        <taxon>Caenorhabditis</taxon>
    </lineage>
</organism>
<feature type="chain" id="PRO_0000332185" description="Tetratricopeptide repeat protein 36">
    <location>
        <begin position="1"/>
        <end position="179"/>
    </location>
</feature>
<feature type="repeat" description="TPR 1">
    <location>
        <begin position="43"/>
        <end position="76"/>
    </location>
</feature>
<feature type="repeat" description="TPR 2">
    <location>
        <begin position="77"/>
        <end position="110"/>
    </location>
</feature>
<feature type="repeat" description="TPR 3">
    <location>
        <begin position="115"/>
        <end position="148"/>
    </location>
</feature>
<reference key="1">
    <citation type="journal article" date="2003" name="PLoS Biol.">
        <title>The genome sequence of Caenorhabditis briggsae: a platform for comparative genomics.</title>
        <authorList>
            <person name="Stein L.D."/>
            <person name="Bao Z."/>
            <person name="Blasiar D."/>
            <person name="Blumenthal T."/>
            <person name="Brent M.R."/>
            <person name="Chen N."/>
            <person name="Chinwalla A."/>
            <person name="Clarke L."/>
            <person name="Clee C."/>
            <person name="Coghlan A."/>
            <person name="Coulson A."/>
            <person name="D'Eustachio P."/>
            <person name="Fitch D.H.A."/>
            <person name="Fulton L.A."/>
            <person name="Fulton R.E."/>
            <person name="Griffiths-Jones S."/>
            <person name="Harris T.W."/>
            <person name="Hillier L.W."/>
            <person name="Kamath R."/>
            <person name="Kuwabara P.E."/>
            <person name="Mardis E.R."/>
            <person name="Marra M.A."/>
            <person name="Miner T.L."/>
            <person name="Minx P."/>
            <person name="Mullikin J.C."/>
            <person name="Plumb R.W."/>
            <person name="Rogers J."/>
            <person name="Schein J.E."/>
            <person name="Sohrmann M."/>
            <person name="Spieth J."/>
            <person name="Stajich J.E."/>
            <person name="Wei C."/>
            <person name="Willey D."/>
            <person name="Wilson R.K."/>
            <person name="Durbin R.M."/>
            <person name="Waterston R.H."/>
        </authorList>
    </citation>
    <scope>NUCLEOTIDE SEQUENCE [LARGE SCALE GENOMIC DNA]</scope>
    <source>
        <strain>AF16</strain>
    </source>
</reference>
<accession>A8XHX1</accession>
<name>TTC36_CAEBR</name>
<sequence>MTTSHDRAVLNQILNPLMPTSDSGMGEVHLESDKVDHPGYTLSSQLEREAVRLAESMNVTDAIEKFTEAIQVCPLNPSAYNNRAQAYRLQNSPEKALEDLNESLRLAGPKTKTACQAYVQRASIYRLQGDDEKARADFAAAAELGSSFAKMQMVALNPYAAMCNKMLAEVFEKAKTGDN</sequence>
<gene>
    <name evidence="2" type="primary">ttc-36</name>
    <name evidence="2" type="ORF">CBG13375</name>
</gene>
<proteinExistence type="inferred from homology"/>
<dbReference type="EMBL" id="HE600919">
    <property type="protein sequence ID" value="CAP32237.1"/>
    <property type="molecule type" value="Genomic_DNA"/>
</dbReference>
<dbReference type="RefSeq" id="XP_002630010.1">
    <property type="nucleotide sequence ID" value="XM_002629964.1"/>
</dbReference>
<dbReference type="SMR" id="A8XHX1"/>
<dbReference type="FunCoup" id="A8XHX1">
    <property type="interactions" value="34"/>
</dbReference>
<dbReference type="STRING" id="6238.A8XHX1"/>
<dbReference type="EnsemblMetazoa" id="CBG13375a.1">
    <property type="protein sequence ID" value="CBG13375a.1"/>
    <property type="gene ID" value="WBGene00034151"/>
</dbReference>
<dbReference type="GeneID" id="8572983"/>
<dbReference type="KEGG" id="cbr:CBG_13375"/>
<dbReference type="CTD" id="8572983"/>
<dbReference type="WormBase" id="CBG13375a">
    <property type="protein sequence ID" value="CBP03297"/>
    <property type="gene ID" value="WBGene00034151"/>
    <property type="gene designation" value="Cbr-ttc-36"/>
</dbReference>
<dbReference type="eggNOG" id="KOG4555">
    <property type="taxonomic scope" value="Eukaryota"/>
</dbReference>
<dbReference type="HOGENOM" id="CLU_1464567_0_0_1"/>
<dbReference type="InParanoid" id="A8XHX1"/>
<dbReference type="OMA" id="CNQMLCE"/>
<dbReference type="OrthoDB" id="539634at2759"/>
<dbReference type="Proteomes" id="UP000008549">
    <property type="component" value="Unassembled WGS sequence"/>
</dbReference>
<dbReference type="GO" id="GO:0006570">
    <property type="term" value="P:tyrosine metabolic process"/>
    <property type="evidence" value="ECO:0000318"/>
    <property type="project" value="GO_Central"/>
</dbReference>
<dbReference type="FunFam" id="1.25.40.10:FF:000213">
    <property type="entry name" value="Tetratricopeptide repeat domain 36"/>
    <property type="match status" value="1"/>
</dbReference>
<dbReference type="Gene3D" id="1.25.40.10">
    <property type="entry name" value="Tetratricopeptide repeat domain"/>
    <property type="match status" value="1"/>
</dbReference>
<dbReference type="InterPro" id="IPR011990">
    <property type="entry name" value="TPR-like_helical_dom_sf"/>
</dbReference>
<dbReference type="InterPro" id="IPR019734">
    <property type="entry name" value="TPR_rpt"/>
</dbReference>
<dbReference type="InterPro" id="IPR038906">
    <property type="entry name" value="TTC36"/>
</dbReference>
<dbReference type="PANTHER" id="PTHR21405">
    <property type="entry name" value="CDNA SEQUENCE BC021608"/>
    <property type="match status" value="1"/>
</dbReference>
<dbReference type="PANTHER" id="PTHR21405:SF0">
    <property type="entry name" value="TETRATRICOPEPTIDE REPEAT PROTEIN 36"/>
    <property type="match status" value="1"/>
</dbReference>
<dbReference type="Pfam" id="PF13431">
    <property type="entry name" value="TPR_17"/>
    <property type="match status" value="1"/>
</dbReference>
<dbReference type="Pfam" id="PF13181">
    <property type="entry name" value="TPR_8"/>
    <property type="match status" value="1"/>
</dbReference>
<dbReference type="SMART" id="SM00028">
    <property type="entry name" value="TPR"/>
    <property type="match status" value="2"/>
</dbReference>
<dbReference type="SUPFAM" id="SSF48452">
    <property type="entry name" value="TPR-like"/>
    <property type="match status" value="1"/>
</dbReference>
<dbReference type="PROSITE" id="PS50293">
    <property type="entry name" value="TPR_REGION"/>
    <property type="match status" value="1"/>
</dbReference>
<protein>
    <recommendedName>
        <fullName evidence="1">Tetratricopeptide repeat protein 36</fullName>
        <shortName evidence="1">TPR repeat protein 36</shortName>
    </recommendedName>
</protein>